<accession>Q3YUE6</accession>
<dbReference type="EMBL" id="CP000038">
    <property type="protein sequence ID" value="AAZ90866.1"/>
    <property type="molecule type" value="Genomic_DNA"/>
</dbReference>
<dbReference type="RefSeq" id="WP_001296681.1">
    <property type="nucleotide sequence ID" value="NC_007384.1"/>
</dbReference>
<dbReference type="SMR" id="Q3YUE6"/>
<dbReference type="GeneID" id="93777622"/>
<dbReference type="KEGG" id="ssn:SSON_4384"/>
<dbReference type="HOGENOM" id="CLU_166075_0_0_6"/>
<dbReference type="Proteomes" id="UP000002529">
    <property type="component" value="Chromosome"/>
</dbReference>
<dbReference type="GO" id="GO:1990077">
    <property type="term" value="C:primosome complex"/>
    <property type="evidence" value="ECO:0007669"/>
    <property type="project" value="UniProtKB-KW"/>
</dbReference>
<dbReference type="GO" id="GO:0003697">
    <property type="term" value="F:single-stranded DNA binding"/>
    <property type="evidence" value="ECO:0007669"/>
    <property type="project" value="UniProtKB-UniRule"/>
</dbReference>
<dbReference type="GO" id="GO:0006269">
    <property type="term" value="P:DNA replication, synthesis of primer"/>
    <property type="evidence" value="ECO:0007669"/>
    <property type="project" value="UniProtKB-KW"/>
</dbReference>
<dbReference type="CDD" id="cd04496">
    <property type="entry name" value="SSB_OBF"/>
    <property type="match status" value="1"/>
</dbReference>
<dbReference type="FunFam" id="2.40.50.140:FF:000077">
    <property type="entry name" value="Primosomal replication protein N"/>
    <property type="match status" value="1"/>
</dbReference>
<dbReference type="Gene3D" id="2.40.50.140">
    <property type="entry name" value="Nucleic acid-binding proteins"/>
    <property type="match status" value="1"/>
</dbReference>
<dbReference type="HAMAP" id="MF_00720">
    <property type="entry name" value="PriB"/>
    <property type="match status" value="1"/>
</dbReference>
<dbReference type="InterPro" id="IPR012340">
    <property type="entry name" value="NA-bd_OB-fold"/>
</dbReference>
<dbReference type="InterPro" id="IPR000424">
    <property type="entry name" value="Primosome_PriB/ssb"/>
</dbReference>
<dbReference type="InterPro" id="IPR023646">
    <property type="entry name" value="Prisomal_replication_PriB"/>
</dbReference>
<dbReference type="NCBIfam" id="TIGR04418">
    <property type="entry name" value="PriB_gamma"/>
    <property type="match status" value="1"/>
</dbReference>
<dbReference type="Pfam" id="PF22657">
    <property type="entry name" value="SSB_1"/>
    <property type="match status" value="1"/>
</dbReference>
<dbReference type="PIRSF" id="PIRSF003135">
    <property type="entry name" value="Primosomal_n"/>
    <property type="match status" value="1"/>
</dbReference>
<dbReference type="SUPFAM" id="SSF50249">
    <property type="entry name" value="Nucleic acid-binding proteins"/>
    <property type="match status" value="1"/>
</dbReference>
<dbReference type="PROSITE" id="PS50935">
    <property type="entry name" value="SSB"/>
    <property type="match status" value="1"/>
</dbReference>
<reference key="1">
    <citation type="journal article" date="2005" name="Nucleic Acids Res.">
        <title>Genome dynamics and diversity of Shigella species, the etiologic agents of bacillary dysentery.</title>
        <authorList>
            <person name="Yang F."/>
            <person name="Yang J."/>
            <person name="Zhang X."/>
            <person name="Chen L."/>
            <person name="Jiang Y."/>
            <person name="Yan Y."/>
            <person name="Tang X."/>
            <person name="Wang J."/>
            <person name="Xiong Z."/>
            <person name="Dong J."/>
            <person name="Xue Y."/>
            <person name="Zhu Y."/>
            <person name="Xu X."/>
            <person name="Sun L."/>
            <person name="Chen S."/>
            <person name="Nie H."/>
            <person name="Peng J."/>
            <person name="Xu J."/>
            <person name="Wang Y."/>
            <person name="Yuan Z."/>
            <person name="Wen Y."/>
            <person name="Yao Z."/>
            <person name="Shen Y."/>
            <person name="Qiang B."/>
            <person name="Hou Y."/>
            <person name="Yu J."/>
            <person name="Jin Q."/>
        </authorList>
    </citation>
    <scope>NUCLEOTIDE SEQUENCE [LARGE SCALE GENOMIC DNA]</scope>
    <source>
        <strain>Ss046</strain>
    </source>
</reference>
<keyword id="KW-0235">DNA replication</keyword>
<keyword id="KW-0238">DNA-binding</keyword>
<keyword id="KW-0639">Primosome</keyword>
<keyword id="KW-1185">Reference proteome</keyword>
<evidence type="ECO:0000255" key="1">
    <source>
        <dbReference type="HAMAP-Rule" id="MF_00720"/>
    </source>
</evidence>
<name>PRIB_SHISS</name>
<organism>
    <name type="scientific">Shigella sonnei (strain Ss046)</name>
    <dbReference type="NCBI Taxonomy" id="300269"/>
    <lineage>
        <taxon>Bacteria</taxon>
        <taxon>Pseudomonadati</taxon>
        <taxon>Pseudomonadota</taxon>
        <taxon>Gammaproteobacteria</taxon>
        <taxon>Enterobacterales</taxon>
        <taxon>Enterobacteriaceae</taxon>
        <taxon>Shigella</taxon>
    </lineage>
</organism>
<sequence length="104" mass="11472">MTNRLVLSGTVCRTPLRKVSPSGIPHCQFVLEHRSVQEEAGFHRQAWCQMPVIVSGHENQAITHSITVGSRITVQGFISCHKAKNGLSKMVLHAEQIELIDSGD</sequence>
<proteinExistence type="inferred from homology"/>
<feature type="chain" id="PRO_1000083301" description="Replication restart protein PriB">
    <location>
        <begin position="1"/>
        <end position="104"/>
    </location>
</feature>
<feature type="domain" description="SSB" evidence="1">
    <location>
        <begin position="1"/>
        <end position="101"/>
    </location>
</feature>
<gene>
    <name evidence="1" type="primary">priB</name>
    <name type="ordered locus">SSON_4384</name>
</gene>
<comment type="function">
    <text evidence="1">Involved in the restart of stalled replication forks, which reloads the replicative helicase on sites other than the origin of replication; the PriA-PriB pathway is the major replication restart pathway. During primosome assembly it facilitates complex formation between PriA and DnaT on DNA; stabilizes PriA on DNA. Stimulates the DNA unwinding activity of PriA helicase.</text>
</comment>
<comment type="subunit">
    <text evidence="1">Homodimer. Interacts with PriA and DnaT. Component of the replication restart primosome. Primosome assembly occurs via a 'hand-off' mechanism. PriA binds to replication forks, subsequently PriB then DnaT bind; DnaT then displaces ssDNA to generate the helicase loading substrate.</text>
</comment>
<comment type="similarity">
    <text evidence="1">Belongs to the PriB family.</text>
</comment>
<protein>
    <recommendedName>
        <fullName evidence="1">Replication restart protein PriB</fullName>
    </recommendedName>
</protein>